<feature type="chain" id="PRO_0000223918" description="Keratin-associated protein 15-1">
    <location>
        <begin position="1"/>
        <end position="136"/>
    </location>
</feature>
<sequence length="136" mass="14608">MSFNCSTGNFSRSLGGYLGVPVSTCDSFYPSNVVYSPSTFQLGSTLYSDCQENFFRPVSFQTPCAVTRSFQTSCSHPQNFIFRSPCQTIYTGSLGSGNIGLGSFGCGSTGFQSLGCGSNFCSPTYVSSRSCRSSYY</sequence>
<dbReference type="EMBL" id="AY510116">
    <property type="protein sequence ID" value="AAS00523.1"/>
    <property type="molecule type" value="mRNA"/>
</dbReference>
<dbReference type="RefSeq" id="NP_001272700.1">
    <property type="nucleotide sequence ID" value="NM_001285771.1"/>
</dbReference>
<dbReference type="STRING" id="9925.ENSCHIP00000011447"/>
<dbReference type="Ensembl" id="ENSCHIT00010006194.1">
    <property type="protein sequence ID" value="ENSCHIP00010004446.1"/>
    <property type="gene ID" value="ENSCHIG00010003211.1"/>
</dbReference>
<dbReference type="Ensembl" id="ENSCHIT00020006609">
    <property type="protein sequence ID" value="ENSCHIP00020005144"/>
    <property type="gene ID" value="ENSCHIG00020003109"/>
</dbReference>
<dbReference type="Ensembl" id="ENSCHIT00040000312">
    <property type="protein sequence ID" value="ENSCHIP00040000273"/>
    <property type="gene ID" value="ENSCHIG00040000170"/>
</dbReference>
<dbReference type="GeneID" id="100861176"/>
<dbReference type="KEGG" id="chx:100861176"/>
<dbReference type="CTD" id="254950"/>
<dbReference type="OrthoDB" id="9834780at2759"/>
<dbReference type="Proteomes" id="UP000291000">
    <property type="component" value="Unplaced"/>
</dbReference>
<dbReference type="Proteomes" id="UP000694566">
    <property type="component" value="Chromosome 1"/>
</dbReference>
<dbReference type="GO" id="GO:0005829">
    <property type="term" value="C:cytosol"/>
    <property type="evidence" value="ECO:0007669"/>
    <property type="project" value="UniProtKB-ARBA"/>
</dbReference>
<dbReference type="GO" id="GO:0005882">
    <property type="term" value="C:intermediate filament"/>
    <property type="evidence" value="ECO:0007669"/>
    <property type="project" value="UniProtKB-KW"/>
</dbReference>
<dbReference type="InterPro" id="IPR007951">
    <property type="entry name" value="KRTAP_PMG"/>
</dbReference>
<dbReference type="Pfam" id="PF05287">
    <property type="entry name" value="PMG"/>
    <property type="match status" value="1"/>
</dbReference>
<reference key="1">
    <citation type="submission" date="2003-12" db="EMBL/GenBank/DDBJ databases">
        <authorList>
            <person name="Yin J."/>
            <person name="Li J.Q."/>
            <person name="Zhou H.M."/>
        </authorList>
    </citation>
    <scope>NUCLEOTIDE SEQUENCE [MRNA]</scope>
</reference>
<gene>
    <name type="primary">KRTAP15-1</name>
</gene>
<organism>
    <name type="scientific">Capra hircus</name>
    <name type="common">Goat</name>
    <dbReference type="NCBI Taxonomy" id="9925"/>
    <lineage>
        <taxon>Eukaryota</taxon>
        <taxon>Metazoa</taxon>
        <taxon>Chordata</taxon>
        <taxon>Craniata</taxon>
        <taxon>Vertebrata</taxon>
        <taxon>Euteleostomi</taxon>
        <taxon>Mammalia</taxon>
        <taxon>Eutheria</taxon>
        <taxon>Laurasiatheria</taxon>
        <taxon>Artiodactyla</taxon>
        <taxon>Ruminantia</taxon>
        <taxon>Pecora</taxon>
        <taxon>Bovidae</taxon>
        <taxon>Caprinae</taxon>
        <taxon>Capra</taxon>
    </lineage>
</organism>
<comment type="function">
    <text>In the hair cortex, hair keratin intermediate filaments are embedded in an interfilamentous matrix, consisting of hair keratin-associated proteins (KRTAP), which are essential for the formation of a rigid and resistant hair shaft through their extensive disulfide bond cross-linking with abundant cysteine residues of hair keratins. The matrix proteins include the high-sulfur and high-glycine-tyrosine keratins.</text>
</comment>
<comment type="subunit">
    <text evidence="1">Interacts with hair keratins.</text>
</comment>
<comment type="similarity">
    <text evidence="2">Belongs to the PMG family.</text>
</comment>
<protein>
    <recommendedName>
        <fullName>Keratin-associated protein 15-1</fullName>
    </recommendedName>
    <alternativeName>
        <fullName>Keratin-associated protein 15.1</fullName>
    </alternativeName>
</protein>
<evidence type="ECO:0000250" key="1"/>
<evidence type="ECO:0000305" key="2"/>
<proteinExistence type="evidence at transcript level"/>
<name>KR151_CAPHI</name>
<accession>Q6R645</accession>
<keyword id="KW-0416">Keratin</keyword>
<keyword id="KW-1185">Reference proteome</keyword>